<feature type="chain" id="PRO_0000275678" description="Photosystem I assembly protein Ycf4">
    <location>
        <begin position="1"/>
        <end position="188"/>
    </location>
</feature>
<feature type="transmembrane region" description="Helical" evidence="1">
    <location>
        <begin position="22"/>
        <end position="42"/>
    </location>
</feature>
<feature type="transmembrane region" description="Helical" evidence="1">
    <location>
        <begin position="68"/>
        <end position="88"/>
    </location>
</feature>
<dbReference type="EMBL" id="AY958086">
    <property type="protein sequence ID" value="AAX45880.1"/>
    <property type="molecule type" value="Genomic_DNA"/>
</dbReference>
<dbReference type="RefSeq" id="YP_636560.1">
    <property type="nucleotide sequence ID" value="NC_008117.1"/>
</dbReference>
<dbReference type="GeneID" id="4108200"/>
<dbReference type="GO" id="GO:0009535">
    <property type="term" value="C:chloroplast thylakoid membrane"/>
    <property type="evidence" value="ECO:0007669"/>
    <property type="project" value="UniProtKB-SubCell"/>
</dbReference>
<dbReference type="GO" id="GO:0009522">
    <property type="term" value="C:photosystem I"/>
    <property type="evidence" value="ECO:0007669"/>
    <property type="project" value="InterPro"/>
</dbReference>
<dbReference type="GO" id="GO:0015979">
    <property type="term" value="P:photosynthesis"/>
    <property type="evidence" value="ECO:0007669"/>
    <property type="project" value="UniProtKB-UniRule"/>
</dbReference>
<dbReference type="HAMAP" id="MF_00437">
    <property type="entry name" value="Ycf4"/>
    <property type="match status" value="1"/>
</dbReference>
<dbReference type="InterPro" id="IPR003359">
    <property type="entry name" value="PSI_Ycf4_assembly"/>
</dbReference>
<dbReference type="PANTHER" id="PTHR33288">
    <property type="match status" value="1"/>
</dbReference>
<dbReference type="PANTHER" id="PTHR33288:SF4">
    <property type="entry name" value="PHOTOSYSTEM I ASSEMBLY PROTEIN YCF4"/>
    <property type="match status" value="1"/>
</dbReference>
<dbReference type="Pfam" id="PF02392">
    <property type="entry name" value="Ycf4"/>
    <property type="match status" value="1"/>
</dbReference>
<protein>
    <recommendedName>
        <fullName evidence="1">Photosystem I assembly protein Ycf4</fullName>
    </recommendedName>
</protein>
<comment type="function">
    <text evidence="1">Seems to be required for the assembly of the photosystem I complex.</text>
</comment>
<comment type="subcellular location">
    <subcellularLocation>
        <location evidence="1">Plastid</location>
        <location evidence="1">Chloroplast thylakoid membrane</location>
        <topology evidence="1">Multi-pass membrane protein</topology>
    </subcellularLocation>
</comment>
<comment type="similarity">
    <text evidence="1">Belongs to the Ycf4 family.</text>
</comment>
<proteinExistence type="inferred from homology"/>
<organism>
    <name type="scientific">Zygnema circumcarinatum</name>
    <name type="common">Green alga</name>
    <dbReference type="NCBI Taxonomy" id="35869"/>
    <lineage>
        <taxon>Eukaryota</taxon>
        <taxon>Viridiplantae</taxon>
        <taxon>Streptophyta</taxon>
        <taxon>Zygnematophyceae</taxon>
        <taxon>Zygnematophycidae</taxon>
        <taxon>Zygnematales</taxon>
        <taxon>Zygnemataceae</taxon>
        <taxon>Zygnema</taxon>
    </lineage>
</organism>
<reference key="1">
    <citation type="journal article" date="2005" name="BMC Biol.">
        <title>The complete chloroplast DNA sequences of the charophycean green algae Staurastrum and Zygnema reveal that the chloroplast genome underwent extensive changes during the evolution of the Zygnematales.</title>
        <authorList>
            <person name="Turmel M."/>
            <person name="Otis C."/>
            <person name="Lemieux C."/>
        </authorList>
    </citation>
    <scope>NUCLEOTIDE SEQUENCE [LARGE SCALE GENOMIC DNA]</scope>
</reference>
<keyword id="KW-0150">Chloroplast</keyword>
<keyword id="KW-0472">Membrane</keyword>
<keyword id="KW-0602">Photosynthesis</keyword>
<keyword id="KW-0934">Plastid</keyword>
<keyword id="KW-0793">Thylakoid</keyword>
<keyword id="KW-0812">Transmembrane</keyword>
<keyword id="KW-1133">Transmembrane helix</keyword>
<accession>Q32RG6</accession>
<name>YCF4_ZYGCR</name>
<geneLocation type="chloroplast"/>
<gene>
    <name evidence="1" type="primary">ycf4</name>
</gene>
<evidence type="ECO:0000255" key="1">
    <source>
        <dbReference type="HAMAP-Rule" id="MF_00437"/>
    </source>
</evidence>
<sequence>MNIQSDGIRIDLVTGSRRISNLGWASVLLLGTSGFLLTGLSSYLGKDLIPFLYPSEEHMKIAFAPQGLVMCFYGIAGLFLSTYLWCAILWNVGGGYNEFDRQEGTITIFRWGFPGQNRRIRIRCLIKDVKAVRIETQTGLLSRNDISILLRDKQRLVFNQLGDSLTLQEIEDKAVQLAQFLQVPLEGV</sequence>